<feature type="chain" id="PRO_0000199989" description="Gas vesicle protein A">
    <location>
        <begin position="1"/>
        <end position="48" status="greater than"/>
    </location>
</feature>
<feature type="non-terminal residue">
    <location>
        <position position="48"/>
    </location>
</feature>
<name>GVPA_SPICC</name>
<gene>
    <name evidence="1 3" type="primary">gvpA</name>
</gene>
<keyword id="KW-0903">Direct protein sequencing</keyword>
<keyword id="KW-0304">Gas vesicle</keyword>
<protein>
    <recommendedName>
        <fullName evidence="1">Gas vesicle protein A</fullName>
        <shortName evidence="1 3">GvpA</shortName>
    </recommendedName>
    <alternativeName>
        <fullName evidence="3">Gas vesicle structural protein</fullName>
    </alternativeName>
</protein>
<comment type="function">
    <text evidence="1">Gas vesicles are hollow, gas filled proteinaceous nanostructures found in some microorganisms. During planktonic growth they allow positioning of the organism at a favorable depth for light or nutrient acquisition. GvpA forms the protein shell.</text>
</comment>
<comment type="subunit">
    <text evidence="1">The gas vesicle shell is 2 nm thick and consists of a single layer of this protein. It forms helical ribs nearly perpendicular to the long axis of the vesicle.</text>
</comment>
<comment type="subcellular location">
    <subcellularLocation>
        <location evidence="1 2">Gas vesicle shell</location>
    </subcellularLocation>
</comment>
<comment type="similarity">
    <text evidence="1">Belongs to the gas vesicle GvpA family.</text>
</comment>
<dbReference type="GO" id="GO:0031411">
    <property type="term" value="C:gas vesicle"/>
    <property type="evidence" value="ECO:0007669"/>
    <property type="project" value="UniProtKB-KW"/>
</dbReference>
<dbReference type="GO" id="GO:0012506">
    <property type="term" value="C:vesicle membrane"/>
    <property type="evidence" value="ECO:0007669"/>
    <property type="project" value="InterPro"/>
</dbReference>
<dbReference type="GO" id="GO:0005198">
    <property type="term" value="F:structural molecule activity"/>
    <property type="evidence" value="ECO:0007669"/>
    <property type="project" value="InterPro"/>
</dbReference>
<dbReference type="InterPro" id="IPR000638">
    <property type="entry name" value="Gas-vesicle_GvpA-like"/>
</dbReference>
<dbReference type="InterPro" id="IPR050530">
    <property type="entry name" value="GvpA"/>
</dbReference>
<dbReference type="InterPro" id="IPR018493">
    <property type="entry name" value="GvpA-like_CS"/>
</dbReference>
<dbReference type="PANTHER" id="PTHR35344:SF4">
    <property type="entry name" value="GAS VESICLE PROTEIN A1"/>
    <property type="match status" value="1"/>
</dbReference>
<dbReference type="PANTHER" id="PTHR35344">
    <property type="entry name" value="GAS VESICLE STRUCTURAL PROTEIN 2-RELATED"/>
    <property type="match status" value="1"/>
</dbReference>
<dbReference type="Pfam" id="PF00741">
    <property type="entry name" value="Gas_vesicle"/>
    <property type="match status" value="1"/>
</dbReference>
<dbReference type="PROSITE" id="PS00234">
    <property type="entry name" value="GAS_VESICLE_A_1"/>
    <property type="match status" value="1"/>
</dbReference>
<accession>P80997</accession>
<organism>
    <name type="scientific">Spirulina sp. (strain CCAP 1475/10)</name>
    <dbReference type="NCBI Taxonomy" id="69016"/>
    <lineage>
        <taxon>Bacteria</taxon>
        <taxon>Bacillati</taxon>
        <taxon>Cyanobacteriota</taxon>
        <taxon>Cyanophyceae</taxon>
        <taxon>Spirulinales</taxon>
        <taxon>Spirulinaceae</taxon>
        <taxon>Spirulina</taxon>
    </lineage>
</organism>
<evidence type="ECO:0000255" key="1">
    <source>
        <dbReference type="HAMAP-Rule" id="MF_00576"/>
    </source>
</evidence>
<evidence type="ECO:0000269" key="2">
    <source>
    </source>
</evidence>
<evidence type="ECO:0000303" key="3">
    <source>
    </source>
</evidence>
<reference key="1">
    <citation type="journal article" date="1992" name="J. Gen. Microbiol.">
        <title>The homologies of gas vesicle proteins.</title>
        <authorList>
            <person name="Griffiths A.E."/>
            <person name="Walsby A.E."/>
            <person name="Hayes P.K."/>
        </authorList>
    </citation>
    <scope>PROTEIN SEQUENCE</scope>
    <scope>SUBCELLULAR LOCATION</scope>
</reference>
<proteinExistence type="evidence at protein level"/>
<sequence length="48" mass="5145">AVEKVNSSSSLAEVIDRILDKGIVIDAWVRVSLVGIELLSVEARXVIA</sequence>